<protein>
    <recommendedName>
        <fullName evidence="1">Aspartate 1-decarboxylase</fullName>
        <ecNumber evidence="1">4.1.1.11</ecNumber>
    </recommendedName>
    <alternativeName>
        <fullName evidence="1">Aspartate alpha-decarboxylase</fullName>
    </alternativeName>
    <component>
        <recommendedName>
            <fullName evidence="1">Aspartate 1-decarboxylase beta chain</fullName>
        </recommendedName>
    </component>
    <component>
        <recommendedName>
            <fullName evidence="1">Aspartate 1-decarboxylase alpha chain</fullName>
        </recommendedName>
    </component>
</protein>
<name>PAND_STACT</name>
<sequence length="127" mass="14066">MIRTMMNAKIHRARVTESNLNYVGSITIDADILDAVDILPNEKVAIVNNNNGARFETYVIKGERGSGKICLNGAASRLVEVDDVVIIMTYAQLNETEIADHAPKVAVMNEKNEIVEMIHEKENTVVL</sequence>
<reference key="1">
    <citation type="journal article" date="2009" name="Appl. Environ. Microbiol.">
        <title>Genome analysis of the meat starter culture bacterium Staphylococcus carnosus TM300.</title>
        <authorList>
            <person name="Rosenstein R."/>
            <person name="Nerz C."/>
            <person name="Biswas L."/>
            <person name="Resch A."/>
            <person name="Raddatz G."/>
            <person name="Schuster S.C."/>
            <person name="Goetz F."/>
        </authorList>
    </citation>
    <scope>NUCLEOTIDE SEQUENCE [LARGE SCALE GENOMIC DNA]</scope>
    <source>
        <strain>TM300</strain>
    </source>
</reference>
<organism>
    <name type="scientific">Staphylococcus carnosus (strain TM300)</name>
    <dbReference type="NCBI Taxonomy" id="396513"/>
    <lineage>
        <taxon>Bacteria</taxon>
        <taxon>Bacillati</taxon>
        <taxon>Bacillota</taxon>
        <taxon>Bacilli</taxon>
        <taxon>Bacillales</taxon>
        <taxon>Staphylococcaceae</taxon>
        <taxon>Staphylococcus</taxon>
    </lineage>
</organism>
<gene>
    <name evidence="1" type="primary">panD</name>
    <name type="ordered locus">Sca_2074</name>
</gene>
<accession>B9DKF6</accession>
<feature type="chain" id="PRO_1000135230" description="Aspartate 1-decarboxylase beta chain" evidence="1">
    <location>
        <begin position="1"/>
        <end position="24"/>
    </location>
</feature>
<feature type="chain" id="PRO_1000135231" description="Aspartate 1-decarboxylase alpha chain" evidence="1">
    <location>
        <begin position="25"/>
        <end position="127"/>
    </location>
</feature>
<feature type="active site" description="Schiff-base intermediate with substrate; via pyruvic acid" evidence="1">
    <location>
        <position position="25"/>
    </location>
</feature>
<feature type="active site" description="Proton donor" evidence="1">
    <location>
        <position position="58"/>
    </location>
</feature>
<feature type="binding site" evidence="1">
    <location>
        <position position="57"/>
    </location>
    <ligand>
        <name>substrate</name>
    </ligand>
</feature>
<feature type="binding site" evidence="1">
    <location>
        <begin position="73"/>
        <end position="75"/>
    </location>
    <ligand>
        <name>substrate</name>
    </ligand>
</feature>
<feature type="modified residue" description="Pyruvic acid (Ser)" evidence="1">
    <location>
        <position position="25"/>
    </location>
</feature>
<dbReference type="EC" id="4.1.1.11" evidence="1"/>
<dbReference type="EMBL" id="AM295250">
    <property type="protein sequence ID" value="CAL28979.1"/>
    <property type="molecule type" value="Genomic_DNA"/>
</dbReference>
<dbReference type="RefSeq" id="WP_015901315.1">
    <property type="nucleotide sequence ID" value="NC_012121.1"/>
</dbReference>
<dbReference type="SMR" id="B9DKF6"/>
<dbReference type="GeneID" id="93794523"/>
<dbReference type="KEGG" id="sca:SCA_2074"/>
<dbReference type="eggNOG" id="COG0853">
    <property type="taxonomic scope" value="Bacteria"/>
</dbReference>
<dbReference type="HOGENOM" id="CLU_115305_2_0_9"/>
<dbReference type="BioCyc" id="SCAR396513:SCA_RS10470-MONOMER"/>
<dbReference type="UniPathway" id="UPA00028">
    <property type="reaction ID" value="UER00002"/>
</dbReference>
<dbReference type="Proteomes" id="UP000000444">
    <property type="component" value="Chromosome"/>
</dbReference>
<dbReference type="GO" id="GO:0005829">
    <property type="term" value="C:cytosol"/>
    <property type="evidence" value="ECO:0007669"/>
    <property type="project" value="TreeGrafter"/>
</dbReference>
<dbReference type="GO" id="GO:0004068">
    <property type="term" value="F:aspartate 1-decarboxylase activity"/>
    <property type="evidence" value="ECO:0007669"/>
    <property type="project" value="UniProtKB-UniRule"/>
</dbReference>
<dbReference type="GO" id="GO:0006523">
    <property type="term" value="P:alanine biosynthetic process"/>
    <property type="evidence" value="ECO:0007669"/>
    <property type="project" value="InterPro"/>
</dbReference>
<dbReference type="GO" id="GO:0015940">
    <property type="term" value="P:pantothenate biosynthetic process"/>
    <property type="evidence" value="ECO:0007669"/>
    <property type="project" value="UniProtKB-UniRule"/>
</dbReference>
<dbReference type="CDD" id="cd06919">
    <property type="entry name" value="Asp_decarbox"/>
    <property type="match status" value="1"/>
</dbReference>
<dbReference type="Gene3D" id="2.40.40.20">
    <property type="match status" value="1"/>
</dbReference>
<dbReference type="HAMAP" id="MF_00446">
    <property type="entry name" value="PanD"/>
    <property type="match status" value="1"/>
</dbReference>
<dbReference type="InterPro" id="IPR009010">
    <property type="entry name" value="Asp_de-COase-like_dom_sf"/>
</dbReference>
<dbReference type="InterPro" id="IPR003190">
    <property type="entry name" value="Asp_decarbox"/>
</dbReference>
<dbReference type="NCBIfam" id="TIGR00223">
    <property type="entry name" value="panD"/>
    <property type="match status" value="1"/>
</dbReference>
<dbReference type="PANTHER" id="PTHR21012">
    <property type="entry name" value="ASPARTATE 1-DECARBOXYLASE"/>
    <property type="match status" value="1"/>
</dbReference>
<dbReference type="PANTHER" id="PTHR21012:SF0">
    <property type="entry name" value="ASPARTATE 1-DECARBOXYLASE"/>
    <property type="match status" value="1"/>
</dbReference>
<dbReference type="Pfam" id="PF02261">
    <property type="entry name" value="Asp_decarbox"/>
    <property type="match status" value="1"/>
</dbReference>
<dbReference type="PIRSF" id="PIRSF006246">
    <property type="entry name" value="Asp_decarbox"/>
    <property type="match status" value="1"/>
</dbReference>
<dbReference type="SUPFAM" id="SSF50692">
    <property type="entry name" value="ADC-like"/>
    <property type="match status" value="1"/>
</dbReference>
<keyword id="KW-0068">Autocatalytic cleavage</keyword>
<keyword id="KW-0963">Cytoplasm</keyword>
<keyword id="KW-0210">Decarboxylase</keyword>
<keyword id="KW-0456">Lyase</keyword>
<keyword id="KW-0566">Pantothenate biosynthesis</keyword>
<keyword id="KW-0670">Pyruvate</keyword>
<keyword id="KW-1185">Reference proteome</keyword>
<keyword id="KW-0704">Schiff base</keyword>
<keyword id="KW-0865">Zymogen</keyword>
<evidence type="ECO:0000255" key="1">
    <source>
        <dbReference type="HAMAP-Rule" id="MF_00446"/>
    </source>
</evidence>
<proteinExistence type="inferred from homology"/>
<comment type="function">
    <text evidence="1">Catalyzes the pyruvoyl-dependent decarboxylation of aspartate to produce beta-alanine.</text>
</comment>
<comment type="catalytic activity">
    <reaction evidence="1">
        <text>L-aspartate + H(+) = beta-alanine + CO2</text>
        <dbReference type="Rhea" id="RHEA:19497"/>
        <dbReference type="ChEBI" id="CHEBI:15378"/>
        <dbReference type="ChEBI" id="CHEBI:16526"/>
        <dbReference type="ChEBI" id="CHEBI:29991"/>
        <dbReference type="ChEBI" id="CHEBI:57966"/>
        <dbReference type="EC" id="4.1.1.11"/>
    </reaction>
</comment>
<comment type="cofactor">
    <cofactor evidence="1">
        <name>pyruvate</name>
        <dbReference type="ChEBI" id="CHEBI:15361"/>
    </cofactor>
    <text evidence="1">Binds 1 pyruvoyl group covalently per subunit.</text>
</comment>
<comment type="pathway">
    <text evidence="1">Cofactor biosynthesis; (R)-pantothenate biosynthesis; beta-alanine from L-aspartate: step 1/1.</text>
</comment>
<comment type="subunit">
    <text evidence="1">Heterooctamer of four alpha and four beta subunits.</text>
</comment>
<comment type="subcellular location">
    <subcellularLocation>
        <location evidence="1">Cytoplasm</location>
    </subcellularLocation>
</comment>
<comment type="PTM">
    <text evidence="1">Is synthesized initially as an inactive proenzyme, which is activated by self-cleavage at a specific serine bond to produce a beta-subunit with a hydroxyl group at its C-terminus and an alpha-subunit with a pyruvoyl group at its N-terminus.</text>
</comment>
<comment type="similarity">
    <text evidence="1">Belongs to the PanD family.</text>
</comment>